<name>YCFP_ECOLC</name>
<dbReference type="EMBL" id="CP000946">
    <property type="protein sequence ID" value="ACA78124.1"/>
    <property type="molecule type" value="Genomic_DNA"/>
</dbReference>
<dbReference type="RefSeq" id="WP_000587930.1">
    <property type="nucleotide sequence ID" value="NZ_MTFT01000032.1"/>
</dbReference>
<dbReference type="SMR" id="B1IUF7"/>
<dbReference type="ESTHER" id="ecoli-ycfp">
    <property type="family name" value="abh_upf00227"/>
</dbReference>
<dbReference type="KEGG" id="ecl:EcolC_2493"/>
<dbReference type="HOGENOM" id="CLU_128769_0_0_6"/>
<dbReference type="FunFam" id="3.40.50.1820:FF:000007">
    <property type="entry name" value="UPF0227 protein YcfP"/>
    <property type="match status" value="1"/>
</dbReference>
<dbReference type="Gene3D" id="3.40.50.1820">
    <property type="entry name" value="alpha/beta hydrolase"/>
    <property type="match status" value="1"/>
</dbReference>
<dbReference type="HAMAP" id="MF_01047">
    <property type="entry name" value="UPF0227"/>
    <property type="match status" value="1"/>
</dbReference>
<dbReference type="InterPro" id="IPR029058">
    <property type="entry name" value="AB_hydrolase_fold"/>
</dbReference>
<dbReference type="InterPro" id="IPR022987">
    <property type="entry name" value="UPF0227"/>
</dbReference>
<dbReference type="InterPro" id="IPR008886">
    <property type="entry name" value="UPF0227/Esterase_YqiA"/>
</dbReference>
<dbReference type="NCBIfam" id="NF003431">
    <property type="entry name" value="PRK04940.1"/>
    <property type="match status" value="1"/>
</dbReference>
<dbReference type="PANTHER" id="PTHR35602">
    <property type="entry name" value="ESTERASE YQIA-RELATED"/>
    <property type="match status" value="1"/>
</dbReference>
<dbReference type="PANTHER" id="PTHR35602:SF2">
    <property type="entry name" value="UPF0227 PROTEIN YCFP"/>
    <property type="match status" value="1"/>
</dbReference>
<dbReference type="Pfam" id="PF05728">
    <property type="entry name" value="UPF0227"/>
    <property type="match status" value="1"/>
</dbReference>
<dbReference type="SUPFAM" id="SSF53474">
    <property type="entry name" value="alpha/beta-Hydrolases"/>
    <property type="match status" value="1"/>
</dbReference>
<evidence type="ECO:0000255" key="1">
    <source>
        <dbReference type="HAMAP-Rule" id="MF_01047"/>
    </source>
</evidence>
<feature type="chain" id="PRO_1000084413" description="UPF0227 protein YcfP">
    <location>
        <begin position="1"/>
        <end position="180"/>
    </location>
</feature>
<reference key="1">
    <citation type="submission" date="2008-02" db="EMBL/GenBank/DDBJ databases">
        <title>Complete sequence of Escherichia coli C str. ATCC 8739.</title>
        <authorList>
            <person name="Copeland A."/>
            <person name="Lucas S."/>
            <person name="Lapidus A."/>
            <person name="Glavina del Rio T."/>
            <person name="Dalin E."/>
            <person name="Tice H."/>
            <person name="Bruce D."/>
            <person name="Goodwin L."/>
            <person name="Pitluck S."/>
            <person name="Kiss H."/>
            <person name="Brettin T."/>
            <person name="Detter J.C."/>
            <person name="Han C."/>
            <person name="Kuske C.R."/>
            <person name="Schmutz J."/>
            <person name="Larimer F."/>
            <person name="Land M."/>
            <person name="Hauser L."/>
            <person name="Kyrpides N."/>
            <person name="Mikhailova N."/>
            <person name="Ingram L."/>
            <person name="Richardson P."/>
        </authorList>
    </citation>
    <scope>NUCLEOTIDE SEQUENCE [LARGE SCALE GENOMIC DNA]</scope>
    <source>
        <strain>ATCC 8739 / DSM 1576 / NBRC 3972 / NCIMB 8545 / WDCM 00012 / Crooks</strain>
    </source>
</reference>
<gene>
    <name evidence="1" type="primary">ycfP</name>
    <name type="ordered locus">EcolC_2493</name>
</gene>
<proteinExistence type="inferred from homology"/>
<organism>
    <name type="scientific">Escherichia coli (strain ATCC 8739 / DSM 1576 / NBRC 3972 / NCIMB 8545 / WDCM 00012 / Crooks)</name>
    <dbReference type="NCBI Taxonomy" id="481805"/>
    <lineage>
        <taxon>Bacteria</taxon>
        <taxon>Pseudomonadati</taxon>
        <taxon>Pseudomonadota</taxon>
        <taxon>Gammaproteobacteria</taxon>
        <taxon>Enterobacterales</taxon>
        <taxon>Enterobacteriaceae</taxon>
        <taxon>Escherichia</taxon>
    </lineage>
</organism>
<accession>B1IUF7</accession>
<protein>
    <recommendedName>
        <fullName evidence="1">UPF0227 protein YcfP</fullName>
    </recommendedName>
</protein>
<comment type="similarity">
    <text evidence="1">Belongs to the UPF0227 family.</text>
</comment>
<sequence length="180" mass="21212">MIIYLHGFDSNSPGNHEKVLQLQFIDPDVRLISYSTRHPKHDMQHLLKEVDKMLQLNVDERPLICGVGLGGYWAERIGFLCDIRQVIFNPNLFPYENMEGKIDRPEEYADIATKCVTNFREKNRDRCLVILSRNDEALNSQRTSEELHHYYEIVWDEEQSHKFKNISPHLQRIKAFKTLG</sequence>